<sequence length="336" mass="38145">MLQSLAGSSCVRLVERHRSARCFGFLVLGYLLYLVFGAVVFSSVELPYEDLLRQELRKLKRRFLEEHECLSEQQLEQFLGRVLEASNYGVSVLSNASGNWNWDFTSALFFASTVLSTTGYGHTVPLSDGGKAFCIIYSVIGIPFTLLFLTAVVQRITVHVTRRPVLYFHIRWGFSKQVVAIVHAVLLGFVTVSCFFFIPAAVFSVLEDDWNFLESFYFCFISLSTIGLGDYVPGEGYNQKFRELYKIGITCYLLLGLIAMLVVLETFCELHELKKFRKMFYVKKDKDEDQVHIIEHDQLSFSSITDQAAGMKEDQKQNEPFVATQSSACMDGPANH</sequence>
<dbReference type="EMBL" id="CR858111">
    <property type="protein sequence ID" value="CAH90350.1"/>
    <property type="molecule type" value="mRNA"/>
</dbReference>
<dbReference type="RefSeq" id="NP_001125168.1">
    <property type="nucleotide sequence ID" value="NM_001131696.1"/>
</dbReference>
<dbReference type="SMR" id="Q5RD07"/>
<dbReference type="STRING" id="9601.ENSPPYP00000000105"/>
<dbReference type="GlyCosmos" id="Q5RD07">
    <property type="glycosylation" value="1 site, No reported glycans"/>
</dbReference>
<dbReference type="GeneID" id="100172055"/>
<dbReference type="KEGG" id="pon:100172055"/>
<dbReference type="CTD" id="3775"/>
<dbReference type="eggNOG" id="KOG1418">
    <property type="taxonomic scope" value="Eukaryota"/>
</dbReference>
<dbReference type="InParanoid" id="Q5RD07"/>
<dbReference type="OrthoDB" id="297496at2759"/>
<dbReference type="Proteomes" id="UP000001595">
    <property type="component" value="Unplaced"/>
</dbReference>
<dbReference type="GO" id="GO:0016324">
    <property type="term" value="C:apical plasma membrane"/>
    <property type="evidence" value="ECO:0007669"/>
    <property type="project" value="UniProtKB-SubCell"/>
</dbReference>
<dbReference type="GO" id="GO:0030425">
    <property type="term" value="C:dendrite"/>
    <property type="evidence" value="ECO:0007669"/>
    <property type="project" value="UniProtKB-SubCell"/>
</dbReference>
<dbReference type="GO" id="GO:0016020">
    <property type="term" value="C:membrane"/>
    <property type="evidence" value="ECO:0000250"/>
    <property type="project" value="UniProtKB"/>
</dbReference>
<dbReference type="GO" id="GO:0043204">
    <property type="term" value="C:perikaryon"/>
    <property type="evidence" value="ECO:0007669"/>
    <property type="project" value="UniProtKB-SubCell"/>
</dbReference>
<dbReference type="GO" id="GO:0005886">
    <property type="term" value="C:plasma membrane"/>
    <property type="evidence" value="ECO:0000250"/>
    <property type="project" value="UniProtKB"/>
</dbReference>
<dbReference type="GO" id="GO:0034705">
    <property type="term" value="C:potassium channel complex"/>
    <property type="evidence" value="ECO:0000250"/>
    <property type="project" value="UniProtKB"/>
</dbReference>
<dbReference type="GO" id="GO:0055037">
    <property type="term" value="C:recycling endosome"/>
    <property type="evidence" value="ECO:0007669"/>
    <property type="project" value="UniProtKB-SubCell"/>
</dbReference>
<dbReference type="GO" id="GO:0097060">
    <property type="term" value="C:synaptic membrane"/>
    <property type="evidence" value="ECO:0007669"/>
    <property type="project" value="UniProtKB-SubCell"/>
</dbReference>
<dbReference type="GO" id="GO:0042802">
    <property type="term" value="F:identical protein binding"/>
    <property type="evidence" value="ECO:0000250"/>
    <property type="project" value="UniProtKB"/>
</dbReference>
<dbReference type="GO" id="GO:0022834">
    <property type="term" value="F:ligand-gated channel activity"/>
    <property type="evidence" value="ECO:0000250"/>
    <property type="project" value="UniProtKB"/>
</dbReference>
<dbReference type="GO" id="GO:0015271">
    <property type="term" value="F:outward rectifier potassium channel activity"/>
    <property type="evidence" value="ECO:0007669"/>
    <property type="project" value="TreeGrafter"/>
</dbReference>
<dbReference type="GO" id="GO:0005267">
    <property type="term" value="F:potassium channel activity"/>
    <property type="evidence" value="ECO:0000250"/>
    <property type="project" value="UniProtKB"/>
</dbReference>
<dbReference type="GO" id="GO:0022841">
    <property type="term" value="F:potassium ion leak channel activity"/>
    <property type="evidence" value="ECO:0000250"/>
    <property type="project" value="UniProtKB"/>
</dbReference>
<dbReference type="GO" id="GO:0046982">
    <property type="term" value="F:protein heterodimerization activity"/>
    <property type="evidence" value="ECO:0000250"/>
    <property type="project" value="UniProtKB"/>
</dbReference>
<dbReference type="GO" id="GO:0005272">
    <property type="term" value="F:sodium channel activity"/>
    <property type="evidence" value="ECO:0000250"/>
    <property type="project" value="UniProtKB"/>
</dbReference>
<dbReference type="GO" id="GO:1902476">
    <property type="term" value="P:chloride transmembrane transport"/>
    <property type="evidence" value="ECO:0000250"/>
    <property type="project" value="UniProtKB"/>
</dbReference>
<dbReference type="GO" id="GO:0014047">
    <property type="term" value="P:glutamate secretion"/>
    <property type="evidence" value="ECO:0000250"/>
    <property type="project" value="UniProtKB"/>
</dbReference>
<dbReference type="GO" id="GO:0071805">
    <property type="term" value="P:potassium ion transmembrane transport"/>
    <property type="evidence" value="ECO:0000250"/>
    <property type="project" value="UniProtKB"/>
</dbReference>
<dbReference type="GO" id="GO:0060075">
    <property type="term" value="P:regulation of resting membrane potential"/>
    <property type="evidence" value="ECO:0000250"/>
    <property type="project" value="UniProtKB"/>
</dbReference>
<dbReference type="GO" id="GO:0035725">
    <property type="term" value="P:sodium ion transmembrane transport"/>
    <property type="evidence" value="ECO:0000250"/>
    <property type="project" value="UniProtKB"/>
</dbReference>
<dbReference type="GO" id="GO:0030322">
    <property type="term" value="P:stabilization of membrane potential"/>
    <property type="evidence" value="ECO:0007669"/>
    <property type="project" value="TreeGrafter"/>
</dbReference>
<dbReference type="FunFam" id="1.10.287.70:FF:000076">
    <property type="entry name" value="Potassium channel subfamily K member"/>
    <property type="match status" value="1"/>
</dbReference>
<dbReference type="Gene3D" id="1.10.287.70">
    <property type="match status" value="1"/>
</dbReference>
<dbReference type="InterPro" id="IPR003280">
    <property type="entry name" value="2pore_dom_K_chnl"/>
</dbReference>
<dbReference type="InterPro" id="IPR003092">
    <property type="entry name" value="2pore_dom_K_chnl_TASK"/>
</dbReference>
<dbReference type="InterPro" id="IPR005408">
    <property type="entry name" value="2pore_dom_K_chnl_TWIK"/>
</dbReference>
<dbReference type="InterPro" id="IPR001779">
    <property type="entry name" value="2pore_dom_K_chnl_TWIK1"/>
</dbReference>
<dbReference type="InterPro" id="IPR013099">
    <property type="entry name" value="K_chnl_dom"/>
</dbReference>
<dbReference type="PANTHER" id="PTHR11003:SF59">
    <property type="entry name" value="POTASSIUM CHANNEL SUBFAMILY K MEMBER 1"/>
    <property type="match status" value="1"/>
</dbReference>
<dbReference type="PANTHER" id="PTHR11003">
    <property type="entry name" value="POTASSIUM CHANNEL, SUBFAMILY K"/>
    <property type="match status" value="1"/>
</dbReference>
<dbReference type="Pfam" id="PF07885">
    <property type="entry name" value="Ion_trans_2"/>
    <property type="match status" value="2"/>
</dbReference>
<dbReference type="PIRSF" id="PIRSF038061">
    <property type="entry name" value="K_channel_subfamily_K_type"/>
    <property type="match status" value="1"/>
</dbReference>
<dbReference type="PRINTS" id="PR01333">
    <property type="entry name" value="2POREKCHANEL"/>
</dbReference>
<dbReference type="PRINTS" id="PR01096">
    <property type="entry name" value="TWIK1CHANNEL"/>
</dbReference>
<dbReference type="PRINTS" id="PR01586">
    <property type="entry name" value="TWIKCHANNEL"/>
</dbReference>
<dbReference type="SUPFAM" id="SSF81324">
    <property type="entry name" value="Voltage-gated potassium channels"/>
    <property type="match status" value="2"/>
</dbReference>
<protein>
    <recommendedName>
        <fullName>Potassium channel subfamily K member 1</fullName>
    </recommendedName>
</protein>
<organism>
    <name type="scientific">Pongo abelii</name>
    <name type="common">Sumatran orangutan</name>
    <name type="synonym">Pongo pygmaeus abelii</name>
    <dbReference type="NCBI Taxonomy" id="9601"/>
    <lineage>
        <taxon>Eukaryota</taxon>
        <taxon>Metazoa</taxon>
        <taxon>Chordata</taxon>
        <taxon>Craniata</taxon>
        <taxon>Vertebrata</taxon>
        <taxon>Euteleostomi</taxon>
        <taxon>Mammalia</taxon>
        <taxon>Eutheria</taxon>
        <taxon>Euarchontoglires</taxon>
        <taxon>Primates</taxon>
        <taxon>Haplorrhini</taxon>
        <taxon>Catarrhini</taxon>
        <taxon>Hominidae</taxon>
        <taxon>Pongo</taxon>
    </lineage>
</organism>
<keyword id="KW-1003">Cell membrane</keyword>
<keyword id="KW-0966">Cell projection</keyword>
<keyword id="KW-0968">Cytoplasmic vesicle</keyword>
<keyword id="KW-1015">Disulfide bond</keyword>
<keyword id="KW-0967">Endosome</keyword>
<keyword id="KW-0325">Glycoprotein</keyword>
<keyword id="KW-0407">Ion channel</keyword>
<keyword id="KW-0406">Ion transport</keyword>
<keyword id="KW-1017">Isopeptide bond</keyword>
<keyword id="KW-0472">Membrane</keyword>
<keyword id="KW-0597">Phosphoprotein</keyword>
<keyword id="KW-0630">Potassium</keyword>
<keyword id="KW-0631">Potassium channel</keyword>
<keyword id="KW-0633">Potassium transport</keyword>
<keyword id="KW-1185">Reference proteome</keyword>
<keyword id="KW-0770">Synapse</keyword>
<keyword id="KW-0812">Transmembrane</keyword>
<keyword id="KW-1133">Transmembrane helix</keyword>
<keyword id="KW-0813">Transport</keyword>
<keyword id="KW-0832">Ubl conjugation</keyword>
<reference evidence="6" key="1">
    <citation type="submission" date="2004-11" db="EMBL/GenBank/DDBJ databases">
        <authorList>
            <consortium name="The German cDNA consortium"/>
        </authorList>
    </citation>
    <scope>NUCLEOTIDE SEQUENCE [LARGE SCALE MRNA]</scope>
    <source>
        <tissue evidence="6">Heart</tissue>
    </source>
</reference>
<comment type="function">
    <text evidence="1 2 3">Ion channel that contributes to passive transmembrane potassium transport and to the regulation of the resting membrane potential in brain astrocytes, but also in kidney and in other tissues. Forms dimeric channels through which potassium ions pass in accordance with their electrochemical gradient. The channel is selective for K(+) ions at physiological potassium concentrations and at neutral pH, but becomes permeable to Na(+) at subphysiological K(+) levels, and upon acidification of the extracellular medium. The homodimer has very low potassium channel activity, when expressed in heterologous systems, and can function as weakly inward rectifying potassium channel (By similarity). Channel activity is modulated by activation of serotonin receptors (By similarity). Heterodimeric channels containing KCNK1 and KCNK2 have much higher activity, and may represent the predominant form in astrocytes (By similarity). Heterodimeric channels containing KCNK1 and KCNK3 or KCNK9 have much higher activity. Heterodimeric channels formed by KCNK1 and KCNK9 may contribute to halothane-sensitive currents (By similarity). Mediates outward rectifying potassium currents in dentate gyrus granule cells and contributes to the regulation of their resting membrane potential (By similarity). Contributes to the regulation of action potential firing in dentate gyrus granule cells and down-regulates their intrinsic excitability (By similarity). In astrocytes, the heterodimer formed by KCNK1 and KCNK2 is required for rapid glutamate release in response to activation of G-protein coupled receptors, such as F2R and CNR1 (By similarity). Required for normal ion and water transport in the kidney (By similarity). Contributes to the regulation of the resting membrane potential of pancreatic beta cells (By similarity). The low channel activity of homodimeric KCNK1 may be due to sumoylation. The low channel activity may be due to rapid internalization from the cell membrane and retention in recycling endosomes (By similarity). Permeable to monovalent cations with ion selectivity for K(+) &gt; Rb(+) &gt;&gt; NH4(+) &gt;&gt; Cs(+) = Na(+) = Li(+).</text>
</comment>
<comment type="catalytic activity">
    <reaction evidence="1">
        <text>K(+)(in) = K(+)(out)</text>
        <dbReference type="Rhea" id="RHEA:29463"/>
        <dbReference type="ChEBI" id="CHEBI:29103"/>
    </reaction>
</comment>
<comment type="catalytic activity">
    <reaction evidence="1">
        <text>NH4(+)(in) = NH4(+)(out)</text>
        <dbReference type="Rhea" id="RHEA:28747"/>
        <dbReference type="ChEBI" id="CHEBI:28938"/>
    </reaction>
</comment>
<comment type="catalytic activity">
    <reaction evidence="1">
        <text>Na(+)(in) = Na(+)(out)</text>
        <dbReference type="Rhea" id="RHEA:34963"/>
        <dbReference type="ChEBI" id="CHEBI:29101"/>
    </reaction>
</comment>
<comment type="catalytic activity">
    <reaction evidence="1">
        <text>Rb(+)(in) = Rb(+)(out)</text>
        <dbReference type="Rhea" id="RHEA:78547"/>
        <dbReference type="ChEBI" id="CHEBI:49847"/>
    </reaction>
</comment>
<comment type="catalytic activity">
    <reaction evidence="1">
        <text>Cs(+)(in) = Cs(+)(out)</text>
        <dbReference type="Rhea" id="RHEA:78555"/>
        <dbReference type="ChEBI" id="CHEBI:49547"/>
    </reaction>
</comment>
<comment type="catalytic activity">
    <reaction evidence="1">
        <text>Li(+)(in) = Li(+)(out)</text>
        <dbReference type="Rhea" id="RHEA:78551"/>
        <dbReference type="ChEBI" id="CHEBI:49713"/>
    </reaction>
</comment>
<comment type="catalytic activity">
    <reaction evidence="2">
        <text>L-glutamate(out) = L-glutamate(in)</text>
        <dbReference type="Rhea" id="RHEA:66336"/>
        <dbReference type="ChEBI" id="CHEBI:29985"/>
    </reaction>
</comment>
<comment type="catalytic activity">
    <reaction evidence="2">
        <text>chloride(in) = chloride(out)</text>
        <dbReference type="Rhea" id="RHEA:29823"/>
        <dbReference type="ChEBI" id="CHEBI:17996"/>
    </reaction>
</comment>
<comment type="subunit">
    <text evidence="1 2">Homodimer; disulfide-linked (By similarity). Heterodimer with KCNK2; disulfide-linked (By similarity). In astrocytes, forms mostly heterodimeric potassium channels with KCNK2, with only a minor proportion of functional channels containing homodimeric KCNK1 (By similarity). Interacts with KCNK3 and KCNK9, forming functional heterodimeric channels (By similarity). Interacts with GNG4 (By similarity). Identified in a complex with PSD and ARF6; interacts only with PSD that is bound to ARF6 (By similarity). Interacts with UBE2I (By similarity).</text>
</comment>
<comment type="subcellular location">
    <subcellularLocation>
        <location evidence="1">Cell membrane</location>
        <topology evidence="1">Multi-pass membrane protein</topology>
    </subcellularLocation>
    <subcellularLocation>
        <location evidence="1">Recycling endosome</location>
    </subcellularLocation>
    <subcellularLocation>
        <location evidence="3">Synaptic cell membrane</location>
    </subcellularLocation>
    <subcellularLocation>
        <location evidence="2">Cytoplasmic vesicle</location>
    </subcellularLocation>
    <subcellularLocation>
        <location evidence="2">Perikaryon</location>
    </subcellularLocation>
    <subcellularLocation>
        <location evidence="2">Cell projection</location>
        <location evidence="2">Dendrite</location>
    </subcellularLocation>
    <subcellularLocation>
        <location evidence="2">Cell projection</location>
    </subcellularLocation>
    <subcellularLocation>
        <location evidence="1">Apical cell membrane</location>
        <topology evidence="1">Multi-pass membrane protein</topology>
    </subcellularLocation>
    <text evidence="1 2 3">The heterodimer with KCNK2 is detected at the astrocyte cell membrane. Not detected at the astrocyte cell membrane when KCNK2 is absent. Detected on neuronal cell bodies, and to a lesser degree on neuronal cell projections. Detected on hippocampus dentate gyrus granule cell bodies and to a lesser degree on proximal dendrites. Detected at the apical cell membrane in stria vascularis in the cochlea. Detected at the apical cell membrane of vestibular dark cells situated between the crista and the utricle in the inner ear. Detected at the apical cell membrane in kidney proximal tubule segment S1 and in subapical compartments in segments S1, S2 and S3. Predominantly in cytoplasmic structures in kidney distal convoluted tubules and collecting ducts (By similarity). Detected at the apical cell membrane of bronchial epithelial cells (By similarity).</text>
</comment>
<comment type="PTM">
    <text evidence="1">Sumoylation is controversial. Sumoylated by UBE2I. Not sumoylated when expressed in xenopus oocytes or mammalian cells. Sumoylation inactivates the channel, but does not interfere with expression at the cell membrane. Sumoylation of a single subunit is sufficient to silence the dimeric channel. Sumoylation of KCNK1 is sufficient to silence heterodimeric channels formed by KCNK1 and KCNK3 or KCNK9. Desumoylated by SENP1; this activates the channel. Desumoylated by SENP1; this strongly increases halothane-mediated activation of heterodimeric channels formed with KCNK9. SENP1 treatment has no effect.</text>
</comment>
<comment type="similarity">
    <text evidence="4">Belongs to the two pore domain potassium channel (TC 1.A.1.8) family.</text>
</comment>
<feature type="chain" id="PRO_0000299070" description="Potassium channel subfamily K member 1">
    <location>
        <begin position="1"/>
        <end position="336"/>
    </location>
</feature>
<feature type="topological domain" description="Cytoplasmic" evidence="1">
    <location>
        <begin position="1"/>
        <end position="20"/>
    </location>
</feature>
<feature type="transmembrane region" description="Helical" evidence="1">
    <location>
        <begin position="21"/>
        <end position="41"/>
    </location>
</feature>
<feature type="topological domain" description="Extracellular" evidence="1">
    <location>
        <begin position="42"/>
        <end position="103"/>
    </location>
</feature>
<feature type="intramembrane region" description="Helical; Name=Pore helix 1" evidence="1">
    <location>
        <begin position="104"/>
        <end position="116"/>
    </location>
</feature>
<feature type="intramembrane region" evidence="1">
    <location>
        <begin position="117"/>
        <end position="122"/>
    </location>
</feature>
<feature type="topological domain" description="Extracellular" evidence="1">
    <location>
        <begin position="123"/>
        <end position="132"/>
    </location>
</feature>
<feature type="transmembrane region" description="Helical" evidence="1">
    <location>
        <begin position="133"/>
        <end position="156"/>
    </location>
</feature>
<feature type="topological domain" description="Cytoplasmic" evidence="1">
    <location>
        <begin position="157"/>
        <end position="181"/>
    </location>
</feature>
<feature type="transmembrane region" description="Helical" evidence="1">
    <location>
        <begin position="182"/>
        <end position="202"/>
    </location>
</feature>
<feature type="topological domain" description="Extracellular" evidence="1">
    <location>
        <begin position="203"/>
        <end position="211"/>
    </location>
</feature>
<feature type="intramembrane region" description="Helical; Name=Pore helix 2" evidence="1">
    <location>
        <begin position="212"/>
        <end position="224"/>
    </location>
</feature>
<feature type="intramembrane region" evidence="1">
    <location>
        <begin position="225"/>
        <end position="231"/>
    </location>
</feature>
<feature type="topological domain" description="Extracellular" evidence="1">
    <location>
        <begin position="232"/>
        <end position="243"/>
    </location>
</feature>
<feature type="transmembrane region" description="Helical" evidence="1">
    <location>
        <begin position="244"/>
        <end position="267"/>
    </location>
</feature>
<feature type="topological domain" description="Cytoplasmic" evidence="1">
    <location>
        <begin position="268"/>
        <end position="336"/>
    </location>
</feature>
<feature type="region of interest" description="Selectivity filter 1" evidence="1">
    <location>
        <begin position="117"/>
        <end position="122"/>
    </location>
</feature>
<feature type="region of interest" description="Selectivity filter 2" evidence="1">
    <location>
        <begin position="225"/>
        <end position="230"/>
    </location>
</feature>
<feature type="region of interest" description="Important for intracellular retention in recycling endosomes" evidence="1">
    <location>
        <begin position="293"/>
        <end position="299"/>
    </location>
</feature>
<feature type="region of interest" description="Disordered" evidence="5">
    <location>
        <begin position="315"/>
        <end position="336"/>
    </location>
</feature>
<feature type="site" description="Important for increased permeability to Na(+) when K(+) levels are subphysiological" evidence="1">
    <location>
        <position position="118"/>
    </location>
</feature>
<feature type="site" description="Part of a hydrophobic barrier that is stochastically dewetted and limits ion permeability" evidence="1">
    <location>
        <position position="146"/>
    </location>
</feature>
<feature type="site" description="Part of a hydrophobic barrier that is stochastically dewetted and limits ion permeability" evidence="1">
    <location>
        <position position="261"/>
    </location>
</feature>
<feature type="modified residue" description="Phosphoserine" evidence="3">
    <location>
        <position position="326"/>
    </location>
</feature>
<feature type="glycosylation site" description="N-linked (GlcNAc...) asparagine" evidence="4">
    <location>
        <position position="95"/>
    </location>
</feature>
<feature type="disulfide bond" description="Interchain" evidence="1">
    <location>
        <position position="69"/>
    </location>
</feature>
<feature type="cross-link" description="Glycyl lysine isopeptide (Lys-Gly) (interchain with G-Cter in SUMO)" evidence="1">
    <location>
        <position position="274"/>
    </location>
</feature>
<gene>
    <name evidence="2" type="primary">KCNK1</name>
</gene>
<evidence type="ECO:0000250" key="1">
    <source>
        <dbReference type="UniProtKB" id="O00180"/>
    </source>
</evidence>
<evidence type="ECO:0000250" key="2">
    <source>
        <dbReference type="UniProtKB" id="O08581"/>
    </source>
</evidence>
<evidence type="ECO:0000250" key="3">
    <source>
        <dbReference type="UniProtKB" id="Q9Z2T2"/>
    </source>
</evidence>
<evidence type="ECO:0000255" key="4"/>
<evidence type="ECO:0000256" key="5">
    <source>
        <dbReference type="SAM" id="MobiDB-lite"/>
    </source>
</evidence>
<evidence type="ECO:0000312" key="6">
    <source>
        <dbReference type="EMBL" id="CAH90350.1"/>
    </source>
</evidence>
<name>KCNK1_PONAB</name>
<proteinExistence type="evidence at transcript level"/>
<accession>Q5RD07</accession>